<evidence type="ECO:0000255" key="1">
    <source>
        <dbReference type="HAMAP-Rule" id="MF_00096"/>
    </source>
</evidence>
<evidence type="ECO:0000256" key="2">
    <source>
        <dbReference type="SAM" id="MobiDB-lite"/>
    </source>
</evidence>
<feature type="chain" id="PRO_0000224395" description="DNA mismatch repair protein MutS">
    <location>
        <begin position="1"/>
        <end position="859"/>
    </location>
</feature>
<feature type="region of interest" description="Disordered" evidence="2">
    <location>
        <begin position="799"/>
        <end position="821"/>
    </location>
</feature>
<feature type="binding site" evidence="1">
    <location>
        <begin position="617"/>
        <end position="624"/>
    </location>
    <ligand>
        <name>ATP</name>
        <dbReference type="ChEBI" id="CHEBI:30616"/>
    </ligand>
</feature>
<proteinExistence type="inferred from homology"/>
<keyword id="KW-0067">ATP-binding</keyword>
<keyword id="KW-0227">DNA damage</keyword>
<keyword id="KW-0234">DNA repair</keyword>
<keyword id="KW-0238">DNA-binding</keyword>
<keyword id="KW-0547">Nucleotide-binding</keyword>
<accession>Q4ZWP5</accession>
<name>MUTS_PSEU2</name>
<sequence>MNKAISDLSAHTPMMQQYWKLKNQHLDQLMFYRMGDFYEIFYEDAKKAAKLLDITLTARGQSAGQSIPMCGIPYHAAEGYLAKLVKLGESVVICEQIGDPATSKGPVDRQVVRIITPGTISDEALLDERRDNLIAAVLGDERLFGLAVLDITSGNFSVLEIKGWENLLAELERINPVELLIPDDWPPGLPAEKRRGSRRRAPWDFERDSAHKSLCQQFATQDLKGFGCENLTLAIGAAGCLLSYAKETQRTALPHLRSLRHERLDDTVILDAASRRNLELDTNLSGGRDNTLQSVMDRCQTAMGTRLLTRWLNRPLRDLTILQARQTSITCFLERYRFENLQPQLKEIGDIERILARIGLRNARPRDLARLRDALSALPELQQAMSDLDAPHLQQLAQTAGTYPELADLLQRAIIDNPPAVIRDGGVLKTGYDAELDDLQSLSENAGQFLIDLEAREKARTGLGNLKVGYNRVHGYFIELPSKQAEQAPADYIRRQTLKGAERFITPELKEFEDKALSAKSRALAREKMLYETLLEDLIGHLAPLQDTAAALAELDVLSNLAERALNLDLNCPRFVAEPCMRIEQGRHPVVEQVLSTPFVANDLALDDSTRMLVITGPNMGGKSTYMRQTALIVLLAHIGSFVPAASCELSLVDRIFTRIGSSDDLAGGRSTFMVEMSETANILHNATDKSLVLMDEVGRGTSTFDGLSLAWAAAECLAQLRAYTLFATHYFELTVLPESEPLVTNVHLNATEHNERIVFLHRVLPGPASQSYGLAVAQLAGVPGKVISRAKEHLQRLETTSLPHEQPRAKPGKPAVPQQSDMFASLPHPVLDELSKVKVDDMTPRQALDLLYTLQTRL</sequence>
<comment type="function">
    <text evidence="1">This protein is involved in the repair of mismatches in DNA. It is possible that it carries out the mismatch recognition step. This protein has a weak ATPase activity.</text>
</comment>
<comment type="similarity">
    <text evidence="1">Belongs to the DNA mismatch repair MutS family.</text>
</comment>
<gene>
    <name evidence="1" type="primary">mutS</name>
    <name type="ordered locus">Psyr_1376</name>
</gene>
<organism>
    <name type="scientific">Pseudomonas syringae pv. syringae (strain B728a)</name>
    <dbReference type="NCBI Taxonomy" id="205918"/>
    <lineage>
        <taxon>Bacteria</taxon>
        <taxon>Pseudomonadati</taxon>
        <taxon>Pseudomonadota</taxon>
        <taxon>Gammaproteobacteria</taxon>
        <taxon>Pseudomonadales</taxon>
        <taxon>Pseudomonadaceae</taxon>
        <taxon>Pseudomonas</taxon>
        <taxon>Pseudomonas syringae</taxon>
    </lineage>
</organism>
<dbReference type="EMBL" id="CP000075">
    <property type="protein sequence ID" value="AAY36427.1"/>
    <property type="molecule type" value="Genomic_DNA"/>
</dbReference>
<dbReference type="RefSeq" id="YP_234465.1">
    <property type="nucleotide sequence ID" value="NC_007005.1"/>
</dbReference>
<dbReference type="SMR" id="Q4ZWP5"/>
<dbReference type="STRING" id="205918.Psyr_1376"/>
<dbReference type="KEGG" id="psb:Psyr_1376"/>
<dbReference type="PATRIC" id="fig|205918.7.peg.1409"/>
<dbReference type="eggNOG" id="COG0249">
    <property type="taxonomic scope" value="Bacteria"/>
</dbReference>
<dbReference type="HOGENOM" id="CLU_002472_4_0_6"/>
<dbReference type="OrthoDB" id="9802448at2"/>
<dbReference type="Proteomes" id="UP000000426">
    <property type="component" value="Chromosome"/>
</dbReference>
<dbReference type="GO" id="GO:0005829">
    <property type="term" value="C:cytosol"/>
    <property type="evidence" value="ECO:0007669"/>
    <property type="project" value="TreeGrafter"/>
</dbReference>
<dbReference type="GO" id="GO:0005524">
    <property type="term" value="F:ATP binding"/>
    <property type="evidence" value="ECO:0007669"/>
    <property type="project" value="UniProtKB-UniRule"/>
</dbReference>
<dbReference type="GO" id="GO:0140664">
    <property type="term" value="F:ATP-dependent DNA damage sensor activity"/>
    <property type="evidence" value="ECO:0007669"/>
    <property type="project" value="InterPro"/>
</dbReference>
<dbReference type="GO" id="GO:0003684">
    <property type="term" value="F:damaged DNA binding"/>
    <property type="evidence" value="ECO:0007669"/>
    <property type="project" value="UniProtKB-UniRule"/>
</dbReference>
<dbReference type="GO" id="GO:0030983">
    <property type="term" value="F:mismatched DNA binding"/>
    <property type="evidence" value="ECO:0007669"/>
    <property type="project" value="InterPro"/>
</dbReference>
<dbReference type="GO" id="GO:0006298">
    <property type="term" value="P:mismatch repair"/>
    <property type="evidence" value="ECO:0007669"/>
    <property type="project" value="UniProtKB-UniRule"/>
</dbReference>
<dbReference type="CDD" id="cd03284">
    <property type="entry name" value="ABC_MutS1"/>
    <property type="match status" value="1"/>
</dbReference>
<dbReference type="FunFam" id="1.10.1420.10:FF:000002">
    <property type="entry name" value="DNA mismatch repair protein MutS"/>
    <property type="match status" value="1"/>
</dbReference>
<dbReference type="FunFam" id="3.40.1170.10:FF:000001">
    <property type="entry name" value="DNA mismatch repair protein MutS"/>
    <property type="match status" value="1"/>
</dbReference>
<dbReference type="FunFam" id="3.40.50.300:FF:000283">
    <property type="entry name" value="DNA mismatch repair protein MutS"/>
    <property type="match status" value="1"/>
</dbReference>
<dbReference type="Gene3D" id="1.10.1420.10">
    <property type="match status" value="2"/>
</dbReference>
<dbReference type="Gene3D" id="6.10.140.430">
    <property type="match status" value="1"/>
</dbReference>
<dbReference type="Gene3D" id="3.40.1170.10">
    <property type="entry name" value="DNA repair protein MutS, domain I"/>
    <property type="match status" value="1"/>
</dbReference>
<dbReference type="Gene3D" id="3.30.420.110">
    <property type="entry name" value="MutS, connector domain"/>
    <property type="match status" value="1"/>
</dbReference>
<dbReference type="Gene3D" id="3.40.50.300">
    <property type="entry name" value="P-loop containing nucleotide triphosphate hydrolases"/>
    <property type="match status" value="1"/>
</dbReference>
<dbReference type="HAMAP" id="MF_00096">
    <property type="entry name" value="MutS"/>
    <property type="match status" value="1"/>
</dbReference>
<dbReference type="InterPro" id="IPR005748">
    <property type="entry name" value="DNA_mismatch_repair_MutS"/>
</dbReference>
<dbReference type="InterPro" id="IPR007695">
    <property type="entry name" value="DNA_mismatch_repair_MutS-lik_N"/>
</dbReference>
<dbReference type="InterPro" id="IPR017261">
    <property type="entry name" value="DNA_mismatch_repair_MutS/MSH"/>
</dbReference>
<dbReference type="InterPro" id="IPR000432">
    <property type="entry name" value="DNA_mismatch_repair_MutS_C"/>
</dbReference>
<dbReference type="InterPro" id="IPR007861">
    <property type="entry name" value="DNA_mismatch_repair_MutS_clamp"/>
</dbReference>
<dbReference type="InterPro" id="IPR007696">
    <property type="entry name" value="DNA_mismatch_repair_MutS_core"/>
</dbReference>
<dbReference type="InterPro" id="IPR016151">
    <property type="entry name" value="DNA_mismatch_repair_MutS_N"/>
</dbReference>
<dbReference type="InterPro" id="IPR036187">
    <property type="entry name" value="DNA_mismatch_repair_MutS_sf"/>
</dbReference>
<dbReference type="InterPro" id="IPR007860">
    <property type="entry name" value="DNA_mmatch_repair_MutS_con_dom"/>
</dbReference>
<dbReference type="InterPro" id="IPR045076">
    <property type="entry name" value="MutS"/>
</dbReference>
<dbReference type="InterPro" id="IPR036678">
    <property type="entry name" value="MutS_con_dom_sf"/>
</dbReference>
<dbReference type="InterPro" id="IPR027417">
    <property type="entry name" value="P-loop_NTPase"/>
</dbReference>
<dbReference type="NCBIfam" id="TIGR01070">
    <property type="entry name" value="mutS1"/>
    <property type="match status" value="1"/>
</dbReference>
<dbReference type="NCBIfam" id="NF003810">
    <property type="entry name" value="PRK05399.1"/>
    <property type="match status" value="1"/>
</dbReference>
<dbReference type="PANTHER" id="PTHR11361:SF34">
    <property type="entry name" value="DNA MISMATCH REPAIR PROTEIN MSH1, MITOCHONDRIAL"/>
    <property type="match status" value="1"/>
</dbReference>
<dbReference type="PANTHER" id="PTHR11361">
    <property type="entry name" value="DNA MISMATCH REPAIR PROTEIN MUTS FAMILY MEMBER"/>
    <property type="match status" value="1"/>
</dbReference>
<dbReference type="Pfam" id="PF01624">
    <property type="entry name" value="MutS_I"/>
    <property type="match status" value="1"/>
</dbReference>
<dbReference type="Pfam" id="PF05188">
    <property type="entry name" value="MutS_II"/>
    <property type="match status" value="1"/>
</dbReference>
<dbReference type="Pfam" id="PF05192">
    <property type="entry name" value="MutS_III"/>
    <property type="match status" value="1"/>
</dbReference>
<dbReference type="Pfam" id="PF05190">
    <property type="entry name" value="MutS_IV"/>
    <property type="match status" value="1"/>
</dbReference>
<dbReference type="Pfam" id="PF00488">
    <property type="entry name" value="MutS_V"/>
    <property type="match status" value="1"/>
</dbReference>
<dbReference type="PIRSF" id="PIRSF037677">
    <property type="entry name" value="DNA_mis_repair_Msh6"/>
    <property type="match status" value="1"/>
</dbReference>
<dbReference type="SMART" id="SM00534">
    <property type="entry name" value="MUTSac"/>
    <property type="match status" value="1"/>
</dbReference>
<dbReference type="SMART" id="SM00533">
    <property type="entry name" value="MUTSd"/>
    <property type="match status" value="1"/>
</dbReference>
<dbReference type="SUPFAM" id="SSF55271">
    <property type="entry name" value="DNA repair protein MutS, domain I"/>
    <property type="match status" value="1"/>
</dbReference>
<dbReference type="SUPFAM" id="SSF53150">
    <property type="entry name" value="DNA repair protein MutS, domain II"/>
    <property type="match status" value="1"/>
</dbReference>
<dbReference type="SUPFAM" id="SSF48334">
    <property type="entry name" value="DNA repair protein MutS, domain III"/>
    <property type="match status" value="1"/>
</dbReference>
<dbReference type="SUPFAM" id="SSF52540">
    <property type="entry name" value="P-loop containing nucleoside triphosphate hydrolases"/>
    <property type="match status" value="1"/>
</dbReference>
<dbReference type="PROSITE" id="PS00486">
    <property type="entry name" value="DNA_MISMATCH_REPAIR_2"/>
    <property type="match status" value="1"/>
</dbReference>
<reference key="1">
    <citation type="journal article" date="2005" name="Proc. Natl. Acad. Sci. U.S.A.">
        <title>Comparison of the complete genome sequences of Pseudomonas syringae pv. syringae B728a and pv. tomato DC3000.</title>
        <authorList>
            <person name="Feil H."/>
            <person name="Feil W.S."/>
            <person name="Chain P."/>
            <person name="Larimer F."/>
            <person name="Dibartolo G."/>
            <person name="Copeland A."/>
            <person name="Lykidis A."/>
            <person name="Trong S."/>
            <person name="Nolan M."/>
            <person name="Goltsman E."/>
            <person name="Thiel J."/>
            <person name="Malfatti S."/>
            <person name="Loper J.E."/>
            <person name="Lapidus A."/>
            <person name="Detter J.C."/>
            <person name="Land M."/>
            <person name="Richardson P.M."/>
            <person name="Kyrpides N.C."/>
            <person name="Ivanova N."/>
            <person name="Lindow S.E."/>
        </authorList>
    </citation>
    <scope>NUCLEOTIDE SEQUENCE [LARGE SCALE GENOMIC DNA]</scope>
    <source>
        <strain>B728a</strain>
    </source>
</reference>
<protein>
    <recommendedName>
        <fullName evidence="1">DNA mismatch repair protein MutS</fullName>
    </recommendedName>
</protein>